<comment type="function">
    <text evidence="1">Catalyzes the attachment of L-aspartate to tRNA(Asp) in a two-step reaction: L-aspartate is first activated by ATP to form Asp-AMP and then transferred to the acceptor end of tRNA(Asp).</text>
</comment>
<comment type="catalytic activity">
    <reaction evidence="1">
        <text>tRNA(Asp) + L-aspartate + ATP = L-aspartyl-tRNA(Asp) + AMP + diphosphate</text>
        <dbReference type="Rhea" id="RHEA:19649"/>
        <dbReference type="Rhea" id="RHEA-COMP:9660"/>
        <dbReference type="Rhea" id="RHEA-COMP:9678"/>
        <dbReference type="ChEBI" id="CHEBI:29991"/>
        <dbReference type="ChEBI" id="CHEBI:30616"/>
        <dbReference type="ChEBI" id="CHEBI:33019"/>
        <dbReference type="ChEBI" id="CHEBI:78442"/>
        <dbReference type="ChEBI" id="CHEBI:78516"/>
        <dbReference type="ChEBI" id="CHEBI:456215"/>
        <dbReference type="EC" id="6.1.1.12"/>
    </reaction>
</comment>
<comment type="subunit">
    <text evidence="1">Homodimer.</text>
</comment>
<comment type="subcellular location">
    <subcellularLocation>
        <location evidence="1">Cytoplasm</location>
    </subcellularLocation>
</comment>
<comment type="similarity">
    <text evidence="1">Belongs to the class-II aminoacyl-tRNA synthetase family. Type 1 subfamily.</text>
</comment>
<proteinExistence type="inferred from homology"/>
<accession>B2VJ90</accession>
<organism>
    <name type="scientific">Erwinia tasmaniensis (strain DSM 17950 / CFBP 7177 / CIP 109463 / NCPPB 4357 / Et1/99)</name>
    <dbReference type="NCBI Taxonomy" id="465817"/>
    <lineage>
        <taxon>Bacteria</taxon>
        <taxon>Pseudomonadati</taxon>
        <taxon>Pseudomonadota</taxon>
        <taxon>Gammaproteobacteria</taxon>
        <taxon>Enterobacterales</taxon>
        <taxon>Erwiniaceae</taxon>
        <taxon>Erwinia</taxon>
    </lineage>
</organism>
<gene>
    <name evidence="1" type="primary">aspS</name>
    <name type="ordered locus">ETA_14850</name>
</gene>
<sequence>MRTEYCGQINLSHVGQQVTLCGWVNRRRDLGSLIFIDMRDREGIVQVFFDPDRQEAFTLASELRNEFCIQIVGTVRARDEKNKNGDMATGEIEIFATELTIINRSEPLPLDSNHINSEEARLKYRYLDLRRPDMANRLKTRAKITSFVRRFMDDQGFLDIETPMLTKATPEGARDYLVPSRVHKGKFYALPQSPQLFKQLLMMSGFDRYYQIVKCFRDEDLRADRQPEFTQIDVETSFMTAPQVREVMERLVRELWQDVKSVDLGAFPSMTFAEAMRRYGSDKPDLRNPMELVDVADLLKNVEFKVFSGPANDVKGRVAALRVPGGAALSRKQIDDYAKFIETYGAKGLAYIKVNERAKGIEGITSPVAKFLNAEIVESILQRTAAADGDLIFFGADSAKVVADALGALRLKLGRDLNITNGSVWAPLWVLDFPMFEDDGEDGLTAMHHPFTAPKEMSPEQLKNAPETAIANAYDMVINGYEVGGGSVRIHNGQMQQTVFGILGITEQEQREKFGFLLDALKFGTPPHAGLAFGLDRLVMLLTGTDNIRDVIAFPKTTAAACLMTEAPNFANPASLTELGIEVVKKAKDRPSEND</sequence>
<dbReference type="EC" id="6.1.1.12" evidence="1"/>
<dbReference type="EMBL" id="CU468135">
    <property type="protein sequence ID" value="CAO96531.1"/>
    <property type="molecule type" value="Genomic_DNA"/>
</dbReference>
<dbReference type="RefSeq" id="WP_012441225.1">
    <property type="nucleotide sequence ID" value="NC_010694.1"/>
</dbReference>
<dbReference type="SMR" id="B2VJ90"/>
<dbReference type="STRING" id="465817.ETA_14850"/>
<dbReference type="KEGG" id="eta:ETA_14850"/>
<dbReference type="eggNOG" id="COG0173">
    <property type="taxonomic scope" value="Bacteria"/>
</dbReference>
<dbReference type="HOGENOM" id="CLU_014330_3_2_6"/>
<dbReference type="OrthoDB" id="9802326at2"/>
<dbReference type="Proteomes" id="UP000001726">
    <property type="component" value="Chromosome"/>
</dbReference>
<dbReference type="GO" id="GO:0005737">
    <property type="term" value="C:cytoplasm"/>
    <property type="evidence" value="ECO:0007669"/>
    <property type="project" value="UniProtKB-SubCell"/>
</dbReference>
<dbReference type="GO" id="GO:0004815">
    <property type="term" value="F:aspartate-tRNA ligase activity"/>
    <property type="evidence" value="ECO:0007669"/>
    <property type="project" value="UniProtKB-UniRule"/>
</dbReference>
<dbReference type="GO" id="GO:0005524">
    <property type="term" value="F:ATP binding"/>
    <property type="evidence" value="ECO:0007669"/>
    <property type="project" value="UniProtKB-UniRule"/>
</dbReference>
<dbReference type="GO" id="GO:0003676">
    <property type="term" value="F:nucleic acid binding"/>
    <property type="evidence" value="ECO:0007669"/>
    <property type="project" value="InterPro"/>
</dbReference>
<dbReference type="GO" id="GO:0006422">
    <property type="term" value="P:aspartyl-tRNA aminoacylation"/>
    <property type="evidence" value="ECO:0007669"/>
    <property type="project" value="UniProtKB-UniRule"/>
</dbReference>
<dbReference type="CDD" id="cd00777">
    <property type="entry name" value="AspRS_core"/>
    <property type="match status" value="1"/>
</dbReference>
<dbReference type="CDD" id="cd04317">
    <property type="entry name" value="EcAspRS_like_N"/>
    <property type="match status" value="1"/>
</dbReference>
<dbReference type="FunFam" id="2.40.50.140:FF:000080">
    <property type="entry name" value="Aspartate--tRNA ligase"/>
    <property type="match status" value="1"/>
</dbReference>
<dbReference type="FunFam" id="3.30.1360.30:FF:000001">
    <property type="entry name" value="Aspartate--tRNA ligase"/>
    <property type="match status" value="1"/>
</dbReference>
<dbReference type="Gene3D" id="3.30.930.10">
    <property type="entry name" value="Bira Bifunctional Protein, Domain 2"/>
    <property type="match status" value="1"/>
</dbReference>
<dbReference type="Gene3D" id="3.30.1360.30">
    <property type="entry name" value="GAD-like domain"/>
    <property type="match status" value="1"/>
</dbReference>
<dbReference type="Gene3D" id="2.40.50.140">
    <property type="entry name" value="Nucleic acid-binding proteins"/>
    <property type="match status" value="1"/>
</dbReference>
<dbReference type="HAMAP" id="MF_00044">
    <property type="entry name" value="Asp_tRNA_synth_type1"/>
    <property type="match status" value="1"/>
</dbReference>
<dbReference type="InterPro" id="IPR004364">
    <property type="entry name" value="Aa-tRNA-synt_II"/>
</dbReference>
<dbReference type="InterPro" id="IPR006195">
    <property type="entry name" value="aa-tRNA-synth_II"/>
</dbReference>
<dbReference type="InterPro" id="IPR045864">
    <property type="entry name" value="aa-tRNA-synth_II/BPL/LPL"/>
</dbReference>
<dbReference type="InterPro" id="IPR004524">
    <property type="entry name" value="Asp-tRNA-ligase_1"/>
</dbReference>
<dbReference type="InterPro" id="IPR047089">
    <property type="entry name" value="Asp-tRNA-ligase_1_N"/>
</dbReference>
<dbReference type="InterPro" id="IPR002312">
    <property type="entry name" value="Asp/Asn-tRNA-synth_IIb"/>
</dbReference>
<dbReference type="InterPro" id="IPR047090">
    <property type="entry name" value="AspRS_core"/>
</dbReference>
<dbReference type="InterPro" id="IPR004115">
    <property type="entry name" value="GAD-like_sf"/>
</dbReference>
<dbReference type="InterPro" id="IPR029351">
    <property type="entry name" value="GAD_dom"/>
</dbReference>
<dbReference type="InterPro" id="IPR012340">
    <property type="entry name" value="NA-bd_OB-fold"/>
</dbReference>
<dbReference type="InterPro" id="IPR004365">
    <property type="entry name" value="NA-bd_OB_tRNA"/>
</dbReference>
<dbReference type="NCBIfam" id="TIGR00459">
    <property type="entry name" value="aspS_bact"/>
    <property type="match status" value="1"/>
</dbReference>
<dbReference type="NCBIfam" id="NF001750">
    <property type="entry name" value="PRK00476.1"/>
    <property type="match status" value="1"/>
</dbReference>
<dbReference type="PANTHER" id="PTHR22594:SF5">
    <property type="entry name" value="ASPARTATE--TRNA LIGASE, MITOCHONDRIAL"/>
    <property type="match status" value="1"/>
</dbReference>
<dbReference type="PANTHER" id="PTHR22594">
    <property type="entry name" value="ASPARTYL/LYSYL-TRNA SYNTHETASE"/>
    <property type="match status" value="1"/>
</dbReference>
<dbReference type="Pfam" id="PF02938">
    <property type="entry name" value="GAD"/>
    <property type="match status" value="1"/>
</dbReference>
<dbReference type="Pfam" id="PF00152">
    <property type="entry name" value="tRNA-synt_2"/>
    <property type="match status" value="1"/>
</dbReference>
<dbReference type="Pfam" id="PF01336">
    <property type="entry name" value="tRNA_anti-codon"/>
    <property type="match status" value="1"/>
</dbReference>
<dbReference type="PRINTS" id="PR01042">
    <property type="entry name" value="TRNASYNTHASP"/>
</dbReference>
<dbReference type="SUPFAM" id="SSF55681">
    <property type="entry name" value="Class II aaRS and biotin synthetases"/>
    <property type="match status" value="1"/>
</dbReference>
<dbReference type="SUPFAM" id="SSF55261">
    <property type="entry name" value="GAD domain-like"/>
    <property type="match status" value="1"/>
</dbReference>
<dbReference type="SUPFAM" id="SSF50249">
    <property type="entry name" value="Nucleic acid-binding proteins"/>
    <property type="match status" value="1"/>
</dbReference>
<dbReference type="PROSITE" id="PS50862">
    <property type="entry name" value="AA_TRNA_LIGASE_II"/>
    <property type="match status" value="1"/>
</dbReference>
<keyword id="KW-0030">Aminoacyl-tRNA synthetase</keyword>
<keyword id="KW-0067">ATP-binding</keyword>
<keyword id="KW-0963">Cytoplasm</keyword>
<keyword id="KW-0436">Ligase</keyword>
<keyword id="KW-0547">Nucleotide-binding</keyword>
<keyword id="KW-0648">Protein biosynthesis</keyword>
<keyword id="KW-1185">Reference proteome</keyword>
<evidence type="ECO:0000255" key="1">
    <source>
        <dbReference type="HAMAP-Rule" id="MF_00044"/>
    </source>
</evidence>
<name>SYD_ERWT9</name>
<protein>
    <recommendedName>
        <fullName evidence="1">Aspartate--tRNA ligase</fullName>
        <ecNumber evidence="1">6.1.1.12</ecNumber>
    </recommendedName>
    <alternativeName>
        <fullName evidence="1">Aspartyl-tRNA synthetase</fullName>
        <shortName evidence="1">AspRS</shortName>
    </alternativeName>
</protein>
<feature type="chain" id="PRO_1000090994" description="Aspartate--tRNA ligase">
    <location>
        <begin position="1"/>
        <end position="595"/>
    </location>
</feature>
<feature type="region of interest" description="Aspartate" evidence="1">
    <location>
        <begin position="195"/>
        <end position="198"/>
    </location>
</feature>
<feature type="binding site" evidence="1">
    <location>
        <position position="171"/>
    </location>
    <ligand>
        <name>L-aspartate</name>
        <dbReference type="ChEBI" id="CHEBI:29991"/>
    </ligand>
</feature>
<feature type="binding site" evidence="1">
    <location>
        <begin position="217"/>
        <end position="219"/>
    </location>
    <ligand>
        <name>ATP</name>
        <dbReference type="ChEBI" id="CHEBI:30616"/>
    </ligand>
</feature>
<feature type="binding site" evidence="1">
    <location>
        <position position="217"/>
    </location>
    <ligand>
        <name>L-aspartate</name>
        <dbReference type="ChEBI" id="CHEBI:29991"/>
    </ligand>
</feature>
<feature type="binding site" evidence="1">
    <location>
        <position position="226"/>
    </location>
    <ligand>
        <name>ATP</name>
        <dbReference type="ChEBI" id="CHEBI:30616"/>
    </ligand>
</feature>
<feature type="binding site" evidence="1">
    <location>
        <position position="448"/>
    </location>
    <ligand>
        <name>L-aspartate</name>
        <dbReference type="ChEBI" id="CHEBI:29991"/>
    </ligand>
</feature>
<feature type="binding site" evidence="1">
    <location>
        <position position="482"/>
    </location>
    <ligand>
        <name>ATP</name>
        <dbReference type="ChEBI" id="CHEBI:30616"/>
    </ligand>
</feature>
<feature type="binding site" evidence="1">
    <location>
        <position position="489"/>
    </location>
    <ligand>
        <name>L-aspartate</name>
        <dbReference type="ChEBI" id="CHEBI:29991"/>
    </ligand>
</feature>
<feature type="binding site" evidence="1">
    <location>
        <begin position="534"/>
        <end position="537"/>
    </location>
    <ligand>
        <name>ATP</name>
        <dbReference type="ChEBI" id="CHEBI:30616"/>
    </ligand>
</feature>
<reference key="1">
    <citation type="journal article" date="2008" name="Environ. Microbiol.">
        <title>The genome of Erwinia tasmaniensis strain Et1/99, a non-pathogenic bacterium in the genus Erwinia.</title>
        <authorList>
            <person name="Kube M."/>
            <person name="Migdoll A.M."/>
            <person name="Mueller I."/>
            <person name="Kuhl H."/>
            <person name="Beck A."/>
            <person name="Reinhardt R."/>
            <person name="Geider K."/>
        </authorList>
    </citation>
    <scope>NUCLEOTIDE SEQUENCE [LARGE SCALE GENOMIC DNA]</scope>
    <source>
        <strain>DSM 17950 / CFBP 7177 / CIP 109463 / NCPPB 4357 / Et1/99</strain>
    </source>
</reference>